<name>PQQC_CERS5</name>
<sequence>MSLDLTPTLSPARPLDSADAMEDRLREIGAARYHDRHPFHHLLHGGQLTRGQVQAWALNRYYYQCSIPVKDAVVISRFRDRATRVEWRHRLEDHDGAEGTEGGIDRWLVLTDALGLDRDYVEATDGILPATRFAVDAYVHFVRDQSPLEAIASCLTELFAPHIHAERISGMLAHYDFVNPTVMAYFQRRLSQAPRDADYALRYVREHARTPQERAAVCNALIFKTQVLWTQLDALHHAYVLGHVPPGAFVPEDMR</sequence>
<feature type="chain" id="PRO_1000061679" description="Pyrroloquinoline-quinone synthase">
    <location>
        <begin position="1"/>
        <end position="255"/>
    </location>
</feature>
<reference key="1">
    <citation type="submission" date="2007-04" db="EMBL/GenBank/DDBJ databases">
        <title>Complete sequence of chromosome of Rhodobacter sphaeroides ATCC 17025.</title>
        <authorList>
            <consortium name="US DOE Joint Genome Institute"/>
            <person name="Copeland A."/>
            <person name="Lucas S."/>
            <person name="Lapidus A."/>
            <person name="Barry K."/>
            <person name="Detter J.C."/>
            <person name="Glavina del Rio T."/>
            <person name="Hammon N."/>
            <person name="Israni S."/>
            <person name="Dalin E."/>
            <person name="Tice H."/>
            <person name="Pitluck S."/>
            <person name="Chertkov O."/>
            <person name="Brettin T."/>
            <person name="Bruce D."/>
            <person name="Han C."/>
            <person name="Schmutz J."/>
            <person name="Larimer F."/>
            <person name="Land M."/>
            <person name="Hauser L."/>
            <person name="Kyrpides N."/>
            <person name="Kim E."/>
            <person name="Richardson P."/>
            <person name="Mackenzie C."/>
            <person name="Choudhary M."/>
            <person name="Donohue T.J."/>
            <person name="Kaplan S."/>
        </authorList>
    </citation>
    <scope>NUCLEOTIDE SEQUENCE [LARGE SCALE GENOMIC DNA]</scope>
    <source>
        <strain>ATCC 17025 / ATH 2.4.3</strain>
    </source>
</reference>
<comment type="function">
    <text evidence="1">Ring cyclization and eight-electron oxidation of 3a-(2-amino-2-carboxyethyl)-4,5-dioxo-4,5,6,7,8,9-hexahydroquinoline-7,9-dicarboxylic-acid to PQQ.</text>
</comment>
<comment type="catalytic activity">
    <reaction evidence="1">
        <text>6-(2-amino-2-carboxyethyl)-7,8-dioxo-1,2,3,4,7,8-hexahydroquinoline-2,4-dicarboxylate + 3 O2 = pyrroloquinoline quinone + 2 H2O2 + 2 H2O + H(+)</text>
        <dbReference type="Rhea" id="RHEA:10692"/>
        <dbReference type="ChEBI" id="CHEBI:15377"/>
        <dbReference type="ChEBI" id="CHEBI:15378"/>
        <dbReference type="ChEBI" id="CHEBI:15379"/>
        <dbReference type="ChEBI" id="CHEBI:16240"/>
        <dbReference type="ChEBI" id="CHEBI:58442"/>
        <dbReference type="ChEBI" id="CHEBI:58778"/>
        <dbReference type="EC" id="1.3.3.11"/>
    </reaction>
</comment>
<comment type="pathway">
    <text evidence="1">Cofactor biosynthesis; pyrroloquinoline quinone biosynthesis.</text>
</comment>
<comment type="similarity">
    <text evidence="1">Belongs to the PqqC family.</text>
</comment>
<proteinExistence type="inferred from homology"/>
<evidence type="ECO:0000255" key="1">
    <source>
        <dbReference type="HAMAP-Rule" id="MF_00654"/>
    </source>
</evidence>
<accession>A4WPI0</accession>
<dbReference type="EC" id="1.3.3.11" evidence="1"/>
<dbReference type="EMBL" id="CP000661">
    <property type="protein sequence ID" value="ABP69294.1"/>
    <property type="molecule type" value="Genomic_DNA"/>
</dbReference>
<dbReference type="SMR" id="A4WPI0"/>
<dbReference type="STRING" id="349102.Rsph17025_0388"/>
<dbReference type="KEGG" id="rsq:Rsph17025_0388"/>
<dbReference type="eggNOG" id="COG5424">
    <property type="taxonomic scope" value="Bacteria"/>
</dbReference>
<dbReference type="HOGENOM" id="CLU_080136_0_0_5"/>
<dbReference type="BioCyc" id="RSPH349102:G1G8M-395-MONOMER"/>
<dbReference type="UniPathway" id="UPA00539"/>
<dbReference type="GO" id="GO:0033732">
    <property type="term" value="F:pyrroloquinoline-quinone synthase activity"/>
    <property type="evidence" value="ECO:0007669"/>
    <property type="project" value="UniProtKB-EC"/>
</dbReference>
<dbReference type="GO" id="GO:0018189">
    <property type="term" value="P:pyrroloquinoline quinone biosynthetic process"/>
    <property type="evidence" value="ECO:0007669"/>
    <property type="project" value="UniProtKB-UniRule"/>
</dbReference>
<dbReference type="GO" id="GO:0006790">
    <property type="term" value="P:sulfur compound metabolic process"/>
    <property type="evidence" value="ECO:0007669"/>
    <property type="project" value="UniProtKB-ARBA"/>
</dbReference>
<dbReference type="Gene3D" id="1.20.910.10">
    <property type="entry name" value="Heme oxygenase-like"/>
    <property type="match status" value="1"/>
</dbReference>
<dbReference type="HAMAP" id="MF_00654">
    <property type="entry name" value="PQQ_syn_PqqC"/>
    <property type="match status" value="1"/>
</dbReference>
<dbReference type="InterPro" id="IPR016084">
    <property type="entry name" value="Haem_Oase-like_multi-hlx"/>
</dbReference>
<dbReference type="InterPro" id="IPR011845">
    <property type="entry name" value="PqqC"/>
</dbReference>
<dbReference type="InterPro" id="IPR039068">
    <property type="entry name" value="PqqC-like"/>
</dbReference>
<dbReference type="InterPro" id="IPR004305">
    <property type="entry name" value="Thiaminase-2/PQQC"/>
</dbReference>
<dbReference type="NCBIfam" id="TIGR02111">
    <property type="entry name" value="PQQ_syn_pqqC"/>
    <property type="match status" value="1"/>
</dbReference>
<dbReference type="PANTHER" id="PTHR40279:SF3">
    <property type="entry name" value="4-AMINOBENZOATE SYNTHASE"/>
    <property type="match status" value="1"/>
</dbReference>
<dbReference type="PANTHER" id="PTHR40279">
    <property type="entry name" value="PQQC-LIKE PROTEIN"/>
    <property type="match status" value="1"/>
</dbReference>
<dbReference type="Pfam" id="PF03070">
    <property type="entry name" value="TENA_THI-4"/>
    <property type="match status" value="1"/>
</dbReference>
<dbReference type="SUPFAM" id="SSF48613">
    <property type="entry name" value="Heme oxygenase-like"/>
    <property type="match status" value="1"/>
</dbReference>
<keyword id="KW-0560">Oxidoreductase</keyword>
<keyword id="KW-0884">PQQ biosynthesis</keyword>
<protein>
    <recommendedName>
        <fullName evidence="1">Pyrroloquinoline-quinone synthase</fullName>
        <ecNumber evidence="1">1.3.3.11</ecNumber>
    </recommendedName>
    <alternativeName>
        <fullName evidence="1">Coenzyme PQQ synthesis protein C</fullName>
    </alternativeName>
    <alternativeName>
        <fullName evidence="1">Pyrroloquinoline quinone biosynthesis protein C</fullName>
    </alternativeName>
</protein>
<gene>
    <name evidence="1" type="primary">pqqC</name>
    <name type="ordered locus">Rsph17025_0388</name>
</gene>
<organism>
    <name type="scientific">Cereibacter sphaeroides (strain ATCC 17025 / ATH 2.4.3)</name>
    <name type="common">Rhodobacter sphaeroides</name>
    <dbReference type="NCBI Taxonomy" id="349102"/>
    <lineage>
        <taxon>Bacteria</taxon>
        <taxon>Pseudomonadati</taxon>
        <taxon>Pseudomonadota</taxon>
        <taxon>Alphaproteobacteria</taxon>
        <taxon>Rhodobacterales</taxon>
        <taxon>Paracoccaceae</taxon>
        <taxon>Cereibacter</taxon>
    </lineage>
</organism>